<protein>
    <recommendedName>
        <fullName evidence="1">Methionine--tRNA ligase</fullName>
        <ecNumber evidence="1">6.1.1.10</ecNumber>
    </recommendedName>
    <alternativeName>
        <fullName evidence="1">Methionyl-tRNA synthetase</fullName>
        <shortName evidence="1">MetRS</shortName>
    </alternativeName>
</protein>
<dbReference type="EC" id="6.1.1.10" evidence="1"/>
<dbReference type="EMBL" id="CP000742">
    <property type="protein sequence ID" value="ABR55234.1"/>
    <property type="molecule type" value="Genomic_DNA"/>
</dbReference>
<dbReference type="RefSeq" id="WP_012066149.1">
    <property type="nucleotide sequence ID" value="NC_009634.1"/>
</dbReference>
<dbReference type="SMR" id="A6URW2"/>
<dbReference type="STRING" id="406327.Mevan_1337"/>
<dbReference type="GeneID" id="5324772"/>
<dbReference type="KEGG" id="mvn:Mevan_1337"/>
<dbReference type="eggNOG" id="arCOG00810">
    <property type="taxonomic scope" value="Archaea"/>
</dbReference>
<dbReference type="HOGENOM" id="CLU_009710_1_2_2"/>
<dbReference type="OrthoDB" id="371856at2157"/>
<dbReference type="Proteomes" id="UP000001107">
    <property type="component" value="Chromosome"/>
</dbReference>
<dbReference type="GO" id="GO:0017101">
    <property type="term" value="C:aminoacyl-tRNA synthetase multienzyme complex"/>
    <property type="evidence" value="ECO:0007669"/>
    <property type="project" value="TreeGrafter"/>
</dbReference>
<dbReference type="GO" id="GO:0005829">
    <property type="term" value="C:cytosol"/>
    <property type="evidence" value="ECO:0007669"/>
    <property type="project" value="TreeGrafter"/>
</dbReference>
<dbReference type="GO" id="GO:0005524">
    <property type="term" value="F:ATP binding"/>
    <property type="evidence" value="ECO:0007669"/>
    <property type="project" value="UniProtKB-UniRule"/>
</dbReference>
<dbReference type="GO" id="GO:0046872">
    <property type="term" value="F:metal ion binding"/>
    <property type="evidence" value="ECO:0007669"/>
    <property type="project" value="UniProtKB-KW"/>
</dbReference>
<dbReference type="GO" id="GO:0004825">
    <property type="term" value="F:methionine-tRNA ligase activity"/>
    <property type="evidence" value="ECO:0007669"/>
    <property type="project" value="UniProtKB-UniRule"/>
</dbReference>
<dbReference type="GO" id="GO:0000049">
    <property type="term" value="F:tRNA binding"/>
    <property type="evidence" value="ECO:0007669"/>
    <property type="project" value="UniProtKB-KW"/>
</dbReference>
<dbReference type="GO" id="GO:0006431">
    <property type="term" value="P:methionyl-tRNA aminoacylation"/>
    <property type="evidence" value="ECO:0007669"/>
    <property type="project" value="UniProtKB-UniRule"/>
</dbReference>
<dbReference type="CDD" id="cd07957">
    <property type="entry name" value="Anticodon_Ia_Met"/>
    <property type="match status" value="1"/>
</dbReference>
<dbReference type="CDD" id="cd00814">
    <property type="entry name" value="MetRS_core"/>
    <property type="match status" value="1"/>
</dbReference>
<dbReference type="CDD" id="cd02800">
    <property type="entry name" value="tRNA_bind_EcMetRS_like"/>
    <property type="match status" value="1"/>
</dbReference>
<dbReference type="FunFam" id="2.20.28.20:FF:000001">
    <property type="entry name" value="Methionine--tRNA ligase"/>
    <property type="match status" value="1"/>
</dbReference>
<dbReference type="FunFam" id="2.40.50.140:FF:000042">
    <property type="entry name" value="Methionine--tRNA ligase"/>
    <property type="match status" value="1"/>
</dbReference>
<dbReference type="Gene3D" id="3.40.50.620">
    <property type="entry name" value="HUPs"/>
    <property type="match status" value="1"/>
</dbReference>
<dbReference type="Gene3D" id="1.10.730.10">
    <property type="entry name" value="Isoleucyl-tRNA Synthetase, Domain 1"/>
    <property type="match status" value="1"/>
</dbReference>
<dbReference type="Gene3D" id="2.20.28.20">
    <property type="entry name" value="Methionyl-tRNA synthetase, Zn-domain"/>
    <property type="match status" value="1"/>
</dbReference>
<dbReference type="Gene3D" id="2.40.50.140">
    <property type="entry name" value="Nucleic acid-binding proteins"/>
    <property type="match status" value="1"/>
</dbReference>
<dbReference type="HAMAP" id="MF_00098">
    <property type="entry name" value="Met_tRNA_synth_type1"/>
    <property type="match status" value="1"/>
</dbReference>
<dbReference type="InterPro" id="IPR041872">
    <property type="entry name" value="Anticodon_Met"/>
</dbReference>
<dbReference type="InterPro" id="IPR013155">
    <property type="entry name" value="M/V/L/I-tRNA-synth_anticd-bd"/>
</dbReference>
<dbReference type="InterPro" id="IPR004495">
    <property type="entry name" value="Met-tRNA-synth_bsu_C"/>
</dbReference>
<dbReference type="InterPro" id="IPR023458">
    <property type="entry name" value="Met-tRNA_ligase_1"/>
</dbReference>
<dbReference type="InterPro" id="IPR014758">
    <property type="entry name" value="Met-tRNA_synth"/>
</dbReference>
<dbReference type="InterPro" id="IPR015413">
    <property type="entry name" value="Methionyl/Leucyl_tRNA_Synth"/>
</dbReference>
<dbReference type="InterPro" id="IPR033911">
    <property type="entry name" value="MetRS_core"/>
</dbReference>
<dbReference type="InterPro" id="IPR029038">
    <property type="entry name" value="MetRS_Zn"/>
</dbReference>
<dbReference type="InterPro" id="IPR012340">
    <property type="entry name" value="NA-bd_OB-fold"/>
</dbReference>
<dbReference type="InterPro" id="IPR014729">
    <property type="entry name" value="Rossmann-like_a/b/a_fold"/>
</dbReference>
<dbReference type="InterPro" id="IPR002547">
    <property type="entry name" value="tRNA-bd_dom"/>
</dbReference>
<dbReference type="InterPro" id="IPR009080">
    <property type="entry name" value="tRNAsynth_Ia_anticodon-bd"/>
</dbReference>
<dbReference type="NCBIfam" id="TIGR00398">
    <property type="entry name" value="metG"/>
    <property type="match status" value="1"/>
</dbReference>
<dbReference type="NCBIfam" id="TIGR00399">
    <property type="entry name" value="metG_C_term"/>
    <property type="match status" value="1"/>
</dbReference>
<dbReference type="NCBIfam" id="NF001100">
    <property type="entry name" value="PRK00133.1"/>
    <property type="match status" value="1"/>
</dbReference>
<dbReference type="PANTHER" id="PTHR45765">
    <property type="entry name" value="METHIONINE--TRNA LIGASE"/>
    <property type="match status" value="1"/>
</dbReference>
<dbReference type="PANTHER" id="PTHR45765:SF1">
    <property type="entry name" value="METHIONINE--TRNA LIGASE, CYTOPLASMIC"/>
    <property type="match status" value="1"/>
</dbReference>
<dbReference type="Pfam" id="PF08264">
    <property type="entry name" value="Anticodon_1"/>
    <property type="match status" value="1"/>
</dbReference>
<dbReference type="Pfam" id="PF09334">
    <property type="entry name" value="tRNA-synt_1g"/>
    <property type="match status" value="1"/>
</dbReference>
<dbReference type="Pfam" id="PF01588">
    <property type="entry name" value="tRNA_bind"/>
    <property type="match status" value="1"/>
</dbReference>
<dbReference type="PRINTS" id="PR01041">
    <property type="entry name" value="TRNASYNTHMET"/>
</dbReference>
<dbReference type="SUPFAM" id="SSF47323">
    <property type="entry name" value="Anticodon-binding domain of a subclass of class I aminoacyl-tRNA synthetases"/>
    <property type="match status" value="1"/>
</dbReference>
<dbReference type="SUPFAM" id="SSF57770">
    <property type="entry name" value="Methionyl-tRNA synthetase (MetRS), Zn-domain"/>
    <property type="match status" value="1"/>
</dbReference>
<dbReference type="SUPFAM" id="SSF50249">
    <property type="entry name" value="Nucleic acid-binding proteins"/>
    <property type="match status" value="1"/>
</dbReference>
<dbReference type="SUPFAM" id="SSF52374">
    <property type="entry name" value="Nucleotidylyl transferase"/>
    <property type="match status" value="1"/>
</dbReference>
<dbReference type="PROSITE" id="PS50886">
    <property type="entry name" value="TRBD"/>
    <property type="match status" value="1"/>
</dbReference>
<keyword id="KW-0030">Aminoacyl-tRNA synthetase</keyword>
<keyword id="KW-0067">ATP-binding</keyword>
<keyword id="KW-0963">Cytoplasm</keyword>
<keyword id="KW-0436">Ligase</keyword>
<keyword id="KW-0479">Metal-binding</keyword>
<keyword id="KW-0547">Nucleotide-binding</keyword>
<keyword id="KW-0648">Protein biosynthesis</keyword>
<keyword id="KW-0694">RNA-binding</keyword>
<keyword id="KW-0820">tRNA-binding</keyword>
<keyword id="KW-0862">Zinc</keyword>
<accession>A6URW2</accession>
<proteinExistence type="inferred from homology"/>
<reference key="1">
    <citation type="submission" date="2007-06" db="EMBL/GenBank/DDBJ databases">
        <title>Complete sequence of Methanococcus vannielii SB.</title>
        <authorList>
            <consortium name="US DOE Joint Genome Institute"/>
            <person name="Copeland A."/>
            <person name="Lucas S."/>
            <person name="Lapidus A."/>
            <person name="Barry K."/>
            <person name="Glavina del Rio T."/>
            <person name="Dalin E."/>
            <person name="Tice H."/>
            <person name="Pitluck S."/>
            <person name="Chain P."/>
            <person name="Malfatti S."/>
            <person name="Shin M."/>
            <person name="Vergez L."/>
            <person name="Schmutz J."/>
            <person name="Larimer F."/>
            <person name="Land M."/>
            <person name="Hauser L."/>
            <person name="Kyrpides N."/>
            <person name="Anderson I."/>
            <person name="Sieprawska-Lupa M."/>
            <person name="Whitman W.B."/>
            <person name="Richardson P."/>
        </authorList>
    </citation>
    <scope>NUCLEOTIDE SEQUENCE [LARGE SCALE GENOMIC DNA]</scope>
    <source>
        <strain>ATCC 35089 / DSM 1224 / JCM 13029 / OCM 148 / SB</strain>
    </source>
</reference>
<organism>
    <name type="scientific">Methanococcus vannielii (strain ATCC 35089 / DSM 1224 / JCM 13029 / OCM 148 / SB)</name>
    <dbReference type="NCBI Taxonomy" id="406327"/>
    <lineage>
        <taxon>Archaea</taxon>
        <taxon>Methanobacteriati</taxon>
        <taxon>Methanobacteriota</taxon>
        <taxon>Methanomada group</taxon>
        <taxon>Methanococci</taxon>
        <taxon>Methanococcales</taxon>
        <taxon>Methanococcaceae</taxon>
        <taxon>Methanococcus</taxon>
    </lineage>
</organism>
<gene>
    <name evidence="1" type="primary">metG</name>
    <name type="ordered locus">Mevan_1337</name>
</gene>
<feature type="chain" id="PRO_0000331944" description="Methionine--tRNA ligase">
    <location>
        <begin position="1"/>
        <end position="663"/>
    </location>
</feature>
<feature type="domain" description="tRNA-binding" evidence="1">
    <location>
        <begin position="563"/>
        <end position="663"/>
    </location>
</feature>
<feature type="short sequence motif" description="'HIGH' region">
    <location>
        <begin position="10"/>
        <end position="20"/>
    </location>
</feature>
<feature type="short sequence motif" description="'KMSKS' region">
    <location>
        <begin position="323"/>
        <end position="327"/>
    </location>
</feature>
<feature type="binding site" evidence="1">
    <location>
        <position position="142"/>
    </location>
    <ligand>
        <name>Zn(2+)</name>
        <dbReference type="ChEBI" id="CHEBI:29105"/>
    </ligand>
</feature>
<feature type="binding site" evidence="1">
    <location>
        <position position="145"/>
    </location>
    <ligand>
        <name>Zn(2+)</name>
        <dbReference type="ChEBI" id="CHEBI:29105"/>
    </ligand>
</feature>
<feature type="binding site" evidence="1">
    <location>
        <position position="154"/>
    </location>
    <ligand>
        <name>Zn(2+)</name>
        <dbReference type="ChEBI" id="CHEBI:29105"/>
    </ligand>
</feature>
<feature type="binding site" evidence="1">
    <location>
        <position position="157"/>
    </location>
    <ligand>
        <name>Zn(2+)</name>
        <dbReference type="ChEBI" id="CHEBI:29105"/>
    </ligand>
</feature>
<feature type="binding site" evidence="1">
    <location>
        <position position="326"/>
    </location>
    <ligand>
        <name>ATP</name>
        <dbReference type="ChEBI" id="CHEBI:30616"/>
    </ligand>
</feature>
<sequence length="663" mass="76805">MKHLVTTALAYTNGPLHLGHARSTYIPADIFTRYLRLKRENVFHVGGTDNHGVPITLKAEKEGVTPLDIVDRYHNAIKEDLDSLNVSFDSFGRTHSDIHIETAQEFYKTLKENGYIYEKEIEQFYCEKCSMSLADRYVEGKCPFCEGEARGDHCEVCGRHLEPTELLEPYCIHCNSKPEIKKSIHYFFKLSAMKEELTEYITNAKEMPEHVKNMALRWIEELHDWDVSRNLTWGVPIPKSNGQVMYVWIEAPIGYVSFTKELGEIWKDYWISKDVQSKITHFIGKDITVHHAVFWPGILKGVKNYKMPDSVVSGGYLTLENKKMSTSKNWVVWVKDFVEKFSPDYLRYFLMVNAPLNRDTDFSWDDFQKRINTELIDIIGNFSHRTLVFTERKFGKIPNVQKDTLKEEDLLLIRKCEKTTETFDKLIREYNFKDAIMEIILLSKEGNAYFQAMQPWAITDEERLKEVMYTCCTTLKYIVYLLSPFMPVKTGELLDLMNEELDLEIRGNDLKKPKVIFTKLEEMDILKMKEKLNSEIKFEEKVSKNEKTAKKTGAKMELIDIEYFTKVDLRVGKVLEVEDVKKSKKLYKIIVDLGNEQRQIISGLKGDYEVEELIGKNVIVICNLKPAKLCGVESEGMLLAAESDGIVSLLNIDREISLGSKIH</sequence>
<comment type="function">
    <text evidence="1">Is required not only for elongation of protein synthesis but also for the initiation of all mRNA translation through initiator tRNA(fMet) aminoacylation.</text>
</comment>
<comment type="catalytic activity">
    <reaction evidence="1">
        <text>tRNA(Met) + L-methionine + ATP = L-methionyl-tRNA(Met) + AMP + diphosphate</text>
        <dbReference type="Rhea" id="RHEA:13481"/>
        <dbReference type="Rhea" id="RHEA-COMP:9667"/>
        <dbReference type="Rhea" id="RHEA-COMP:9698"/>
        <dbReference type="ChEBI" id="CHEBI:30616"/>
        <dbReference type="ChEBI" id="CHEBI:33019"/>
        <dbReference type="ChEBI" id="CHEBI:57844"/>
        <dbReference type="ChEBI" id="CHEBI:78442"/>
        <dbReference type="ChEBI" id="CHEBI:78530"/>
        <dbReference type="ChEBI" id="CHEBI:456215"/>
        <dbReference type="EC" id="6.1.1.10"/>
    </reaction>
</comment>
<comment type="cofactor">
    <cofactor evidence="1">
        <name>Zn(2+)</name>
        <dbReference type="ChEBI" id="CHEBI:29105"/>
    </cofactor>
    <text evidence="1">Binds 1 zinc ion per subunit.</text>
</comment>
<comment type="subunit">
    <text evidence="1">Homodimer.</text>
</comment>
<comment type="subcellular location">
    <subcellularLocation>
        <location evidence="1">Cytoplasm</location>
    </subcellularLocation>
</comment>
<comment type="similarity">
    <text evidence="1">Belongs to the class-I aminoacyl-tRNA synthetase family. MetG type 1 subfamily.</text>
</comment>
<evidence type="ECO:0000255" key="1">
    <source>
        <dbReference type="HAMAP-Rule" id="MF_00098"/>
    </source>
</evidence>
<name>SYM_METVS</name>